<protein>
    <recommendedName>
        <fullName evidence="1">Large ribosomal subunit protein bL33</fullName>
    </recommendedName>
    <alternativeName>
        <fullName evidence="2">50S ribosomal protein L33</fullName>
    </alternativeName>
</protein>
<organism>
    <name type="scientific">Campylobacter hominis (strain ATCC BAA-381 / DSM 21671 / CCUG 45161 / LMG 19568 / NCTC 13146 / CH001A)</name>
    <dbReference type="NCBI Taxonomy" id="360107"/>
    <lineage>
        <taxon>Bacteria</taxon>
        <taxon>Pseudomonadati</taxon>
        <taxon>Campylobacterota</taxon>
        <taxon>Epsilonproteobacteria</taxon>
        <taxon>Campylobacterales</taxon>
        <taxon>Campylobacteraceae</taxon>
        <taxon>Campylobacter</taxon>
    </lineage>
</organism>
<dbReference type="EMBL" id="CP000776">
    <property type="protein sequence ID" value="ABS52124.1"/>
    <property type="molecule type" value="Genomic_DNA"/>
</dbReference>
<dbReference type="RefSeq" id="WP_012109493.1">
    <property type="nucleotide sequence ID" value="NC_009714.1"/>
</dbReference>
<dbReference type="SMR" id="A7I3U6"/>
<dbReference type="STRING" id="360107.CHAB381_1671"/>
<dbReference type="KEGG" id="cha:CHAB381_1671"/>
<dbReference type="eggNOG" id="COG0267">
    <property type="taxonomic scope" value="Bacteria"/>
</dbReference>
<dbReference type="HOGENOM" id="CLU_190949_0_2_7"/>
<dbReference type="Proteomes" id="UP000002407">
    <property type="component" value="Chromosome"/>
</dbReference>
<dbReference type="GO" id="GO:0005737">
    <property type="term" value="C:cytoplasm"/>
    <property type="evidence" value="ECO:0007669"/>
    <property type="project" value="UniProtKB-ARBA"/>
</dbReference>
<dbReference type="GO" id="GO:1990904">
    <property type="term" value="C:ribonucleoprotein complex"/>
    <property type="evidence" value="ECO:0007669"/>
    <property type="project" value="UniProtKB-KW"/>
</dbReference>
<dbReference type="GO" id="GO:0005840">
    <property type="term" value="C:ribosome"/>
    <property type="evidence" value="ECO:0007669"/>
    <property type="project" value="UniProtKB-KW"/>
</dbReference>
<dbReference type="GO" id="GO:0003735">
    <property type="term" value="F:structural constituent of ribosome"/>
    <property type="evidence" value="ECO:0007669"/>
    <property type="project" value="InterPro"/>
</dbReference>
<dbReference type="GO" id="GO:0006412">
    <property type="term" value="P:translation"/>
    <property type="evidence" value="ECO:0007669"/>
    <property type="project" value="UniProtKB-UniRule"/>
</dbReference>
<dbReference type="Gene3D" id="2.20.28.120">
    <property type="entry name" value="Ribosomal protein L33"/>
    <property type="match status" value="1"/>
</dbReference>
<dbReference type="HAMAP" id="MF_00294">
    <property type="entry name" value="Ribosomal_bL33"/>
    <property type="match status" value="1"/>
</dbReference>
<dbReference type="InterPro" id="IPR001705">
    <property type="entry name" value="Ribosomal_bL33"/>
</dbReference>
<dbReference type="InterPro" id="IPR018264">
    <property type="entry name" value="Ribosomal_bL33_CS"/>
</dbReference>
<dbReference type="InterPro" id="IPR038584">
    <property type="entry name" value="Ribosomal_bL33_sf"/>
</dbReference>
<dbReference type="InterPro" id="IPR011332">
    <property type="entry name" value="Ribosomal_zn-bd"/>
</dbReference>
<dbReference type="NCBIfam" id="NF001764">
    <property type="entry name" value="PRK00504.1"/>
    <property type="match status" value="1"/>
</dbReference>
<dbReference type="NCBIfam" id="NF001860">
    <property type="entry name" value="PRK00595.1"/>
    <property type="match status" value="1"/>
</dbReference>
<dbReference type="NCBIfam" id="TIGR01023">
    <property type="entry name" value="rpmG_bact"/>
    <property type="match status" value="1"/>
</dbReference>
<dbReference type="PANTHER" id="PTHR43168">
    <property type="entry name" value="50S RIBOSOMAL PROTEIN L33, CHLOROPLASTIC"/>
    <property type="match status" value="1"/>
</dbReference>
<dbReference type="PANTHER" id="PTHR43168:SF6">
    <property type="entry name" value="LARGE RIBOSOMAL SUBUNIT PROTEIN BL33A"/>
    <property type="match status" value="1"/>
</dbReference>
<dbReference type="Pfam" id="PF00471">
    <property type="entry name" value="Ribosomal_L33"/>
    <property type="match status" value="1"/>
</dbReference>
<dbReference type="SUPFAM" id="SSF57829">
    <property type="entry name" value="Zn-binding ribosomal proteins"/>
    <property type="match status" value="1"/>
</dbReference>
<dbReference type="PROSITE" id="PS00582">
    <property type="entry name" value="RIBOSOMAL_L33"/>
    <property type="match status" value="1"/>
</dbReference>
<proteinExistence type="inferred from homology"/>
<keyword id="KW-1185">Reference proteome</keyword>
<keyword id="KW-0687">Ribonucleoprotein</keyword>
<keyword id="KW-0689">Ribosomal protein</keyword>
<name>RL33_CAMHC</name>
<feature type="chain" id="PRO_0000356416" description="Large ribosomal subunit protein bL33">
    <location>
        <begin position="1"/>
        <end position="56"/>
    </location>
</feature>
<comment type="similarity">
    <text evidence="1">Belongs to the bacterial ribosomal protein bL33 family.</text>
</comment>
<sequence length="56" mass="6522">MAKNANRVKIGLKCSECGDINYTTYKNNKNTANKIELKKYCPRLKKHTVHKEIKLK</sequence>
<evidence type="ECO:0000255" key="1">
    <source>
        <dbReference type="HAMAP-Rule" id="MF_00294"/>
    </source>
</evidence>
<evidence type="ECO:0000305" key="2"/>
<accession>A7I3U6</accession>
<gene>
    <name evidence="1" type="primary">rpmG</name>
    <name type="ordered locus">CHAB381_1671</name>
</gene>
<reference key="1">
    <citation type="submission" date="2007-07" db="EMBL/GenBank/DDBJ databases">
        <title>Complete genome sequence of Campylobacter hominis ATCC BAA-381, a commensal isolated from the human gastrointestinal tract.</title>
        <authorList>
            <person name="Fouts D.E."/>
            <person name="Mongodin E.F."/>
            <person name="Puiu D."/>
            <person name="Sebastian Y."/>
            <person name="Miller W.G."/>
            <person name="Mandrell R.E."/>
            <person name="Nelson K.E."/>
        </authorList>
    </citation>
    <scope>NUCLEOTIDE SEQUENCE [LARGE SCALE GENOMIC DNA]</scope>
    <source>
        <strain>ATCC BAA-381 / DSM 21671 / CCUG 45161 / LMG 19568 / NCTC 13146 / CH001A</strain>
    </source>
</reference>